<proteinExistence type="inferred from homology"/>
<protein>
    <recommendedName>
        <fullName evidence="1">UPF0250 protein KPN78578_06520</fullName>
    </recommendedName>
</protein>
<feature type="chain" id="PRO_1000061875" description="UPF0250 protein KPN78578_06520">
    <location>
        <begin position="1"/>
        <end position="87"/>
    </location>
</feature>
<evidence type="ECO:0000255" key="1">
    <source>
        <dbReference type="HAMAP-Rule" id="MF_00659"/>
    </source>
</evidence>
<sequence>MKTKLNELLEFPTPFTYKVMGQALPELVDQVVEVVQRHAPGDYSPSVKPSSKGNYHSVSITINATHIEQVETLYEELGNIDIVRMVL</sequence>
<comment type="similarity">
    <text evidence="1">Belongs to the UPF0250 family.</text>
</comment>
<name>Y652_KLEP7</name>
<dbReference type="EMBL" id="CP000647">
    <property type="protein sequence ID" value="ABR76113.1"/>
    <property type="molecule type" value="Genomic_DNA"/>
</dbReference>
<dbReference type="SMR" id="A6T692"/>
<dbReference type="STRING" id="272620.KPN_00663"/>
<dbReference type="PaxDb" id="272620-KPN_00663"/>
<dbReference type="EnsemblBacteria" id="ABR76113">
    <property type="protein sequence ID" value="ABR76113"/>
    <property type="gene ID" value="KPN_00663"/>
</dbReference>
<dbReference type="KEGG" id="kpn:KPN_00663"/>
<dbReference type="HOGENOM" id="CLU_161438_2_1_6"/>
<dbReference type="Proteomes" id="UP000000265">
    <property type="component" value="Chromosome"/>
</dbReference>
<dbReference type="GO" id="GO:0005829">
    <property type="term" value="C:cytosol"/>
    <property type="evidence" value="ECO:0007669"/>
    <property type="project" value="TreeGrafter"/>
</dbReference>
<dbReference type="FunFam" id="3.30.70.260:FF:000002">
    <property type="entry name" value="UPF0250 protein YbeD"/>
    <property type="match status" value="1"/>
</dbReference>
<dbReference type="Gene3D" id="3.30.70.260">
    <property type="match status" value="1"/>
</dbReference>
<dbReference type="HAMAP" id="MF_00659">
    <property type="entry name" value="UPF0250"/>
    <property type="match status" value="1"/>
</dbReference>
<dbReference type="InterPro" id="IPR007454">
    <property type="entry name" value="UPF0250_YbeD-like"/>
</dbReference>
<dbReference type="InterPro" id="IPR027471">
    <property type="entry name" value="YbeD-like_sf"/>
</dbReference>
<dbReference type="NCBIfam" id="NF003447">
    <property type="entry name" value="PRK04998.1"/>
    <property type="match status" value="1"/>
</dbReference>
<dbReference type="PANTHER" id="PTHR38036">
    <property type="entry name" value="UPF0250 PROTEIN YBED"/>
    <property type="match status" value="1"/>
</dbReference>
<dbReference type="PANTHER" id="PTHR38036:SF1">
    <property type="entry name" value="UPF0250 PROTEIN YBED"/>
    <property type="match status" value="1"/>
</dbReference>
<dbReference type="Pfam" id="PF04359">
    <property type="entry name" value="DUF493"/>
    <property type="match status" value="1"/>
</dbReference>
<dbReference type="SUPFAM" id="SSF117991">
    <property type="entry name" value="YbeD/HP0495-like"/>
    <property type="match status" value="1"/>
</dbReference>
<gene>
    <name type="ordered locus">KPN78578_06520</name>
    <name type="ORF">KPN_00663</name>
</gene>
<reference key="1">
    <citation type="submission" date="2006-09" db="EMBL/GenBank/DDBJ databases">
        <authorList>
            <consortium name="The Klebsiella pneumonia Genome Sequencing Project"/>
            <person name="McClelland M."/>
            <person name="Sanderson E.K."/>
            <person name="Spieth J."/>
            <person name="Clifton W.S."/>
            <person name="Latreille P."/>
            <person name="Sabo A."/>
            <person name="Pepin K."/>
            <person name="Bhonagiri V."/>
            <person name="Porwollik S."/>
            <person name="Ali J."/>
            <person name="Wilson R.K."/>
        </authorList>
    </citation>
    <scope>NUCLEOTIDE SEQUENCE [LARGE SCALE GENOMIC DNA]</scope>
    <source>
        <strain>ATCC 700721 / MGH 78578</strain>
    </source>
</reference>
<organism>
    <name type="scientific">Klebsiella pneumoniae subsp. pneumoniae (strain ATCC 700721 / MGH 78578)</name>
    <dbReference type="NCBI Taxonomy" id="272620"/>
    <lineage>
        <taxon>Bacteria</taxon>
        <taxon>Pseudomonadati</taxon>
        <taxon>Pseudomonadota</taxon>
        <taxon>Gammaproteobacteria</taxon>
        <taxon>Enterobacterales</taxon>
        <taxon>Enterobacteriaceae</taxon>
        <taxon>Klebsiella/Raoultella group</taxon>
        <taxon>Klebsiella</taxon>
        <taxon>Klebsiella pneumoniae complex</taxon>
    </lineage>
</organism>
<accession>A6T692</accession>